<protein>
    <recommendedName>
        <fullName>Extracellular metalloproteinase 5</fullName>
        <ecNumber>3.4.24.-</ecNumber>
    </recommendedName>
    <alternativeName>
        <fullName>Elastinolytic metalloproteinase MEP5</fullName>
    </alternativeName>
    <alternativeName>
        <fullName>Fungalysin MEP5</fullName>
    </alternativeName>
</protein>
<sequence>MHGLLLAAGLLSLPLHVLAHPQPSTTTSLAGRAGTVDLNEFRMAHRSSYTGNDEMMKQPSIASFRQGTYLEVATELVKQTMPNMEFRLVDDHYVGDSGIGHVRFRQTMHGIDIDNSDFNVNIGKDGKVLSHGNSFYTGPAPSSNPMVKRDFMDPMQALHGVRKALKLPIKADGATVQDMSEHKVMFKGTSGALSDPTAKLCYMAKEDGSLALTWRVETDIGDNWLLSYMDAKESAKVHNVVDYVAHATFQVYKWGLADPTEGNREILNNPWNLKTSPLTWLADGQNNFTATRGNNAIAQYNPDGGNDYENNYRPSPKNLKFEYPYSANMDPPKTYIDASVTQLFYTSNVCHDLYYMLGFTEKAGNFQVNNRGQGGKGGDYVILNAQDGSGTNNANFATPPDGQPGRMRAYIWTRANPPRDASFEAGTVIHEYTHGLSNRLCGGPANSRCLNAIESGGMGEGWGDFYATAIRLKPKDTRKTNYVKGGWVNNSPKGVRMYPYSTDMSVNPLVYTSNNKLNEVHAIGTVWCSMLYEVLWNLIDKHGKNDGPVPVFENGVPKDGKYLAMKIVMDAWPCIQPCNPNFVQARDAILDADKNLTKGANKCEIWKGFAKRGLGVGAKYDPKNRTGSNEVPKEYKYSAHME</sequence>
<accession>E4UVK2</accession>
<reference key="1">
    <citation type="journal article" date="2012" name="MBio">
        <title>Comparative genome analysis of Trichophyton rubrum and related dermatophytes reveals candidate genes involved in infection.</title>
        <authorList>
            <person name="Martinez D.A."/>
            <person name="Oliver B.G."/>
            <person name="Graeser Y."/>
            <person name="Goldberg J.M."/>
            <person name="Li W."/>
            <person name="Martinez-Rossi N.M."/>
            <person name="Monod M."/>
            <person name="Shelest E."/>
            <person name="Barton R.C."/>
            <person name="Birch E."/>
            <person name="Brakhage A.A."/>
            <person name="Chen Z."/>
            <person name="Gurr S.J."/>
            <person name="Heiman D."/>
            <person name="Heitman J."/>
            <person name="Kosti I."/>
            <person name="Rossi A."/>
            <person name="Saif S."/>
            <person name="Samalova M."/>
            <person name="Saunders C.W."/>
            <person name="Shea T."/>
            <person name="Summerbell R.C."/>
            <person name="Xu J."/>
            <person name="Young S."/>
            <person name="Zeng Q."/>
            <person name="Birren B.W."/>
            <person name="Cuomo C.A."/>
            <person name="White T.C."/>
        </authorList>
    </citation>
    <scope>NUCLEOTIDE SEQUENCE [LARGE SCALE GENOMIC DNA]</scope>
    <source>
        <strain>ATCC MYA-4604 / CBS 118893</strain>
    </source>
</reference>
<comment type="function">
    <text evidence="1">Secreted metalloproteinase that allows assimilation of proteinaceous substrates and probably acts as a virulence factor.</text>
</comment>
<comment type="cofactor">
    <cofactor evidence="1">
        <name>Zn(2+)</name>
        <dbReference type="ChEBI" id="CHEBI:29105"/>
    </cofactor>
    <text evidence="1">Binds 1 zinc ion per subunit.</text>
</comment>
<comment type="subcellular location">
    <subcellularLocation>
        <location evidence="1">Secreted</location>
    </subcellularLocation>
</comment>
<comment type="similarity">
    <text evidence="4">Belongs to the peptidase M36 family.</text>
</comment>
<dbReference type="EC" id="3.4.24.-"/>
<dbReference type="EMBL" id="DS989825">
    <property type="protein sequence ID" value="EFR02329.1"/>
    <property type="molecule type" value="Genomic_DNA"/>
</dbReference>
<dbReference type="RefSeq" id="XP_003172740.1">
    <property type="nucleotide sequence ID" value="XM_003172692.1"/>
</dbReference>
<dbReference type="SMR" id="E4UVK2"/>
<dbReference type="MEROPS" id="M36.001"/>
<dbReference type="GlyCosmos" id="E4UVK2">
    <property type="glycosylation" value="3 sites, No reported glycans"/>
</dbReference>
<dbReference type="GeneID" id="10028016"/>
<dbReference type="VEuPathDB" id="FungiDB:MGYG_05327"/>
<dbReference type="eggNOG" id="ENOG502QTDC">
    <property type="taxonomic scope" value="Eukaryota"/>
</dbReference>
<dbReference type="HOGENOM" id="CLU_012703_3_0_1"/>
<dbReference type="InParanoid" id="E4UVK2"/>
<dbReference type="OMA" id="YIWTRAN"/>
<dbReference type="OrthoDB" id="3227768at2759"/>
<dbReference type="Proteomes" id="UP000002669">
    <property type="component" value="Unassembled WGS sequence"/>
</dbReference>
<dbReference type="GO" id="GO:0005576">
    <property type="term" value="C:extracellular region"/>
    <property type="evidence" value="ECO:0007669"/>
    <property type="project" value="UniProtKB-SubCell"/>
</dbReference>
<dbReference type="GO" id="GO:0004222">
    <property type="term" value="F:metalloendopeptidase activity"/>
    <property type="evidence" value="ECO:0007669"/>
    <property type="project" value="InterPro"/>
</dbReference>
<dbReference type="GO" id="GO:0008270">
    <property type="term" value="F:zinc ion binding"/>
    <property type="evidence" value="ECO:0007669"/>
    <property type="project" value="InterPro"/>
</dbReference>
<dbReference type="GO" id="GO:0006508">
    <property type="term" value="P:proteolysis"/>
    <property type="evidence" value="ECO:0007669"/>
    <property type="project" value="UniProtKB-KW"/>
</dbReference>
<dbReference type="CDD" id="cd09596">
    <property type="entry name" value="M36"/>
    <property type="match status" value="1"/>
</dbReference>
<dbReference type="Gene3D" id="3.10.170.10">
    <property type="match status" value="1"/>
</dbReference>
<dbReference type="Gene3D" id="1.10.390.10">
    <property type="entry name" value="Neutral Protease Domain 2"/>
    <property type="match status" value="1"/>
</dbReference>
<dbReference type="InterPro" id="IPR011096">
    <property type="entry name" value="FTP_domain"/>
</dbReference>
<dbReference type="InterPro" id="IPR050371">
    <property type="entry name" value="Fungal_virulence_M36"/>
</dbReference>
<dbReference type="InterPro" id="IPR001842">
    <property type="entry name" value="Peptidase_M36"/>
</dbReference>
<dbReference type="InterPro" id="IPR027268">
    <property type="entry name" value="Peptidase_M4/M1_CTD_sf"/>
</dbReference>
<dbReference type="PANTHER" id="PTHR33478">
    <property type="entry name" value="EXTRACELLULAR METALLOPROTEINASE MEP"/>
    <property type="match status" value="1"/>
</dbReference>
<dbReference type="PANTHER" id="PTHR33478:SF1">
    <property type="entry name" value="EXTRACELLULAR METALLOPROTEINASE MEP"/>
    <property type="match status" value="1"/>
</dbReference>
<dbReference type="Pfam" id="PF07504">
    <property type="entry name" value="FTP"/>
    <property type="match status" value="1"/>
</dbReference>
<dbReference type="Pfam" id="PF02128">
    <property type="entry name" value="Peptidase_M36"/>
    <property type="match status" value="1"/>
</dbReference>
<dbReference type="PRINTS" id="PR00999">
    <property type="entry name" value="FUNGALYSIN"/>
</dbReference>
<dbReference type="SUPFAM" id="SSF55486">
    <property type="entry name" value="Metalloproteases ('zincins'), catalytic domain"/>
    <property type="match status" value="1"/>
</dbReference>
<dbReference type="PROSITE" id="PS00142">
    <property type="entry name" value="ZINC_PROTEASE"/>
    <property type="match status" value="1"/>
</dbReference>
<organism>
    <name type="scientific">Arthroderma gypseum (strain ATCC MYA-4604 / CBS 118893)</name>
    <name type="common">Microsporum gypseum</name>
    <dbReference type="NCBI Taxonomy" id="535722"/>
    <lineage>
        <taxon>Eukaryota</taxon>
        <taxon>Fungi</taxon>
        <taxon>Dikarya</taxon>
        <taxon>Ascomycota</taxon>
        <taxon>Pezizomycotina</taxon>
        <taxon>Eurotiomycetes</taxon>
        <taxon>Eurotiomycetidae</taxon>
        <taxon>Onygenales</taxon>
        <taxon>Arthrodermataceae</taxon>
        <taxon>Nannizzia</taxon>
    </lineage>
</organism>
<keyword id="KW-0325">Glycoprotein</keyword>
<keyword id="KW-0378">Hydrolase</keyword>
<keyword id="KW-0479">Metal-binding</keyword>
<keyword id="KW-0482">Metalloprotease</keyword>
<keyword id="KW-0645">Protease</keyword>
<keyword id="KW-1185">Reference proteome</keyword>
<keyword id="KW-0964">Secreted</keyword>
<keyword id="KW-0732">Signal</keyword>
<keyword id="KW-0862">Zinc</keyword>
<keyword id="KW-0865">Zymogen</keyword>
<proteinExistence type="inferred from homology"/>
<name>MEP5_ARTGP</name>
<feature type="signal peptide" evidence="2">
    <location>
        <begin position="1"/>
        <end position="19"/>
    </location>
</feature>
<feature type="propeptide" id="PRO_0000407168" evidence="1">
    <location>
        <begin position="20"/>
        <end position="246"/>
    </location>
</feature>
<feature type="chain" id="PRO_0000407169" description="Extracellular metalloproteinase 5">
    <location>
        <begin position="247"/>
        <end position="642"/>
    </location>
</feature>
<feature type="active site" evidence="3">
    <location>
        <position position="431"/>
    </location>
</feature>
<feature type="binding site" evidence="3">
    <location>
        <position position="430"/>
    </location>
    <ligand>
        <name>Zn(2+)</name>
        <dbReference type="ChEBI" id="CHEBI:29105"/>
        <note>catalytic</note>
    </ligand>
</feature>
<feature type="binding site" evidence="3">
    <location>
        <position position="434"/>
    </location>
    <ligand>
        <name>Zn(2+)</name>
        <dbReference type="ChEBI" id="CHEBI:29105"/>
        <note>catalytic</note>
    </ligand>
</feature>
<feature type="glycosylation site" description="N-linked (GlcNAc...) asparagine" evidence="2">
    <location>
        <position position="287"/>
    </location>
</feature>
<feature type="glycosylation site" description="N-linked (GlcNAc...) asparagine" evidence="2">
    <location>
        <position position="595"/>
    </location>
</feature>
<feature type="glycosylation site" description="N-linked (GlcNAc...) asparagine" evidence="2">
    <location>
        <position position="624"/>
    </location>
</feature>
<evidence type="ECO:0000250" key="1"/>
<evidence type="ECO:0000255" key="2"/>
<evidence type="ECO:0000255" key="3">
    <source>
        <dbReference type="PROSITE-ProRule" id="PRU10095"/>
    </source>
</evidence>
<evidence type="ECO:0000305" key="4"/>
<gene>
    <name type="primary">MEP5</name>
    <name type="ORF">MGYG_05327</name>
</gene>